<sequence>QVNFTPGW</sequence>
<comment type="function">
    <text evidence="1">This hormone, released from cells in the corpora cardiaca, causes release of diglycerides from the fat body and stimulation of muscles to use these diglycerides as an energy source during energy-demanding processes.</text>
</comment>
<comment type="subcellular location">
    <subcellularLocation>
        <location evidence="6">Secreted</location>
    </subcellularLocation>
</comment>
<comment type="similarity">
    <text evidence="2">Belongs to the AKH/HRTH/RPCH family.</text>
</comment>
<protein>
    <recommendedName>
        <fullName evidence="4">Adipokinetic hormone</fullName>
        <shortName evidence="4">AKH</shortName>
    </recommendedName>
</protein>
<organism>
    <name type="scientific">Lobatophasma redelinghuysense</name>
    <name type="common">Gladiator</name>
    <name type="synonym">Heel-walker</name>
    <dbReference type="NCBI Taxonomy" id="253128"/>
    <lineage>
        <taxon>Eukaryota</taxon>
        <taxon>Metazoa</taxon>
        <taxon>Ecdysozoa</taxon>
        <taxon>Arthropoda</taxon>
        <taxon>Hexapoda</taxon>
        <taxon>Insecta</taxon>
        <taxon>Pterygota</taxon>
        <taxon>Neoptera</taxon>
        <taxon>Polyneoptera</taxon>
        <taxon>Mantophasmatodea</taxon>
        <taxon>Austrophasmatidae</taxon>
        <taxon>Lobatophasma</taxon>
    </lineage>
</organism>
<reference evidence="5" key="1">
    <citation type="journal article" date="2012" name="Syst. Biol.">
        <title>Peptidomics-based phylogeny and biogeography of Mantophasmatodea (Hexapoda).</title>
        <authorList>
            <person name="Predel R."/>
            <person name="Neupert S."/>
            <person name="Huetteroth W."/>
            <person name="Kahnt J."/>
            <person name="Waidelich D."/>
            <person name="Roth S."/>
        </authorList>
    </citation>
    <scope>PROTEIN SEQUENCE</scope>
    <scope>PYROGLUTAMATE FORMATION AT GLN-1</scope>
    <scope>AMIDATION AT TRP-8</scope>
    <source>
        <tissue evidence="3">Corpora cardiaca</tissue>
    </source>
</reference>
<dbReference type="GO" id="GO:0005576">
    <property type="term" value="C:extracellular region"/>
    <property type="evidence" value="ECO:0007669"/>
    <property type="project" value="UniProtKB-SubCell"/>
</dbReference>
<dbReference type="GO" id="GO:0005179">
    <property type="term" value="F:hormone activity"/>
    <property type="evidence" value="ECO:0007669"/>
    <property type="project" value="UniProtKB-KW"/>
</dbReference>
<dbReference type="GO" id="GO:0007629">
    <property type="term" value="P:flight behavior"/>
    <property type="evidence" value="ECO:0007669"/>
    <property type="project" value="UniProtKB-KW"/>
</dbReference>
<dbReference type="GO" id="GO:0007218">
    <property type="term" value="P:neuropeptide signaling pathway"/>
    <property type="evidence" value="ECO:0007669"/>
    <property type="project" value="UniProtKB-KW"/>
</dbReference>
<dbReference type="InterPro" id="IPR002047">
    <property type="entry name" value="Adipokinetic_hormone_CS"/>
</dbReference>
<dbReference type="PROSITE" id="PS00256">
    <property type="entry name" value="AKH"/>
    <property type="match status" value="1"/>
</dbReference>
<feature type="peptide" id="PRO_0000421656" description="Adipokinetic hormone" evidence="3">
    <location>
        <begin position="1"/>
        <end position="8"/>
    </location>
</feature>
<feature type="modified residue" description="Pyrrolidone carboxylic acid" evidence="3">
    <location>
        <position position="1"/>
    </location>
</feature>
<feature type="modified residue" description="Tryptophan amide" evidence="3">
    <location>
        <position position="8"/>
    </location>
</feature>
<accession>B3A094</accession>
<evidence type="ECO:0000250" key="1">
    <source>
        <dbReference type="UniProtKB" id="P55319"/>
    </source>
</evidence>
<evidence type="ECO:0000255" key="2"/>
<evidence type="ECO:0000269" key="3">
    <source>
    </source>
</evidence>
<evidence type="ECO:0000303" key="4">
    <source>
    </source>
</evidence>
<evidence type="ECO:0000305" key="5"/>
<evidence type="ECO:0000305" key="6">
    <source>
    </source>
</evidence>
<keyword id="KW-0027">Amidation</keyword>
<keyword id="KW-0903">Direct protein sequencing</keyword>
<keyword id="KW-0286">Flight</keyword>
<keyword id="KW-0372">Hormone</keyword>
<keyword id="KW-0527">Neuropeptide</keyword>
<keyword id="KW-0873">Pyrrolidone carboxylic acid</keyword>
<keyword id="KW-0964">Secreted</keyword>
<proteinExistence type="evidence at protein level"/>
<name>AKH_LOBRE</name>